<sequence>MAREFSLEKTRNIGIMAHVDAGKTTTTERILYYTGKIHKIGETHEGASQMDWMEQEQERGITITSAATTAQWNNHRVNIIDTPGHVDFTIEVQRSLRVLDGAVTVLDSQSGVEPQTETVWRQATEYGVPRIVFANKMDKIGADFLYSVSTLHDRLQANAHPIQLPIGSEDDFRGIIDLIKMKAEIYTNDLGTDILEEDIPAEYLDQAQEYREKLIEAVAETDEELMMKYLEGEEITNEELKAGIRKATINVEFFPVLCGSAFKNKGVQLMLDAVIDYLPSPLDIPAIKGINPDTDAEEIRPASDEEPFAALAFKIMTDPFVGRLTFFRVYSGVLQSGSYVLNTSKGKRERIGRILQMHANSRQEIDTVYSGDIAAAVGLKDTTTGDSLTDEKAKIILESINVPEPVIQLMVEPKSKADQDKMGIALQKLAEEDPTFRVETNVETGETVISGMGELHLDVLVDRMRREFKVEANVGAPQVSYRETFRASTQARGFFKRQSGGKGQFGDVWIEFTPNEEGKGFEFENAIVGGVVPREFIPAVEKGLVESMANGVLAGYPMVDVKAKLYDGSYHDVDSSETAFKIAASLSLKEAAKSAQPAILEPMMLVTITVPEENLGDVMGHVTARRGRVDGMEAHGNSQIVRAYVPLAEMFGYATVLRSASQGRGTFMMVFDHYEDVPKSVQEEIIKKNKGED</sequence>
<name>EFG_STRR6</name>
<reference key="1">
    <citation type="journal article" date="2001" name="J. Bacteriol.">
        <title>Genome of the bacterium Streptococcus pneumoniae strain R6.</title>
        <authorList>
            <person name="Hoskins J."/>
            <person name="Alborn W.E. Jr."/>
            <person name="Arnold J."/>
            <person name="Blaszczak L.C."/>
            <person name="Burgett S."/>
            <person name="DeHoff B.S."/>
            <person name="Estrem S.T."/>
            <person name="Fritz L."/>
            <person name="Fu D.-J."/>
            <person name="Fuller W."/>
            <person name="Geringer C."/>
            <person name="Gilmour R."/>
            <person name="Glass J.S."/>
            <person name="Khoja H."/>
            <person name="Kraft A.R."/>
            <person name="Lagace R.E."/>
            <person name="LeBlanc D.J."/>
            <person name="Lee L.N."/>
            <person name="Lefkowitz E.J."/>
            <person name="Lu J."/>
            <person name="Matsushima P."/>
            <person name="McAhren S.M."/>
            <person name="McHenney M."/>
            <person name="McLeaster K."/>
            <person name="Mundy C.W."/>
            <person name="Nicas T.I."/>
            <person name="Norris F.H."/>
            <person name="O'Gara M."/>
            <person name="Peery R.B."/>
            <person name="Robertson G.T."/>
            <person name="Rockey P."/>
            <person name="Sun P.-M."/>
            <person name="Winkler M.E."/>
            <person name="Yang Y."/>
            <person name="Young-Bellido M."/>
            <person name="Zhao G."/>
            <person name="Zook C.A."/>
            <person name="Baltz R.H."/>
            <person name="Jaskunas S.R."/>
            <person name="Rosteck P.R. Jr."/>
            <person name="Skatrud P.L."/>
            <person name="Glass J.I."/>
        </authorList>
    </citation>
    <scope>NUCLEOTIDE SEQUENCE [LARGE SCALE GENOMIC DNA]</scope>
    <source>
        <strain>ATCC BAA-255 / R6</strain>
    </source>
</reference>
<proteinExistence type="inferred from homology"/>
<comment type="function">
    <text evidence="1">Catalyzes the GTP-dependent ribosomal translocation step during translation elongation. During this step, the ribosome changes from the pre-translocational (PRE) to the post-translocational (POST) state as the newly formed A-site-bound peptidyl-tRNA and P-site-bound deacylated tRNA move to the P and E sites, respectively. Catalyzes the coordinated movement of the two tRNA molecules, the mRNA and conformational changes in the ribosome.</text>
</comment>
<comment type="subcellular location">
    <subcellularLocation>
        <location evidence="1">Cytoplasm</location>
    </subcellularLocation>
</comment>
<comment type="similarity">
    <text evidence="1">Belongs to the TRAFAC class translation factor GTPase superfamily. Classic translation factor GTPase family. EF-G/EF-2 subfamily.</text>
</comment>
<protein>
    <recommendedName>
        <fullName evidence="1">Elongation factor G</fullName>
        <shortName evidence="1">EF-G</shortName>
    </recommendedName>
</protein>
<dbReference type="EMBL" id="AE007317">
    <property type="protein sequence ID" value="AAK99054.1"/>
    <property type="molecule type" value="Genomic_DNA"/>
</dbReference>
<dbReference type="PIR" id="B97903">
    <property type="entry name" value="B97903"/>
</dbReference>
<dbReference type="RefSeq" id="NP_357844.1">
    <property type="nucleotide sequence ID" value="NC_003098.1"/>
</dbReference>
<dbReference type="RefSeq" id="WP_000090344.1">
    <property type="nucleotide sequence ID" value="NC_003098.1"/>
</dbReference>
<dbReference type="SMR" id="P64023"/>
<dbReference type="STRING" id="171101.spr0250"/>
<dbReference type="KEGG" id="spr:spr0250"/>
<dbReference type="PATRIC" id="fig|171101.6.peg.285"/>
<dbReference type="eggNOG" id="COG0480">
    <property type="taxonomic scope" value="Bacteria"/>
</dbReference>
<dbReference type="HOGENOM" id="CLU_002794_4_1_9"/>
<dbReference type="Proteomes" id="UP000000586">
    <property type="component" value="Chromosome"/>
</dbReference>
<dbReference type="GO" id="GO:0005737">
    <property type="term" value="C:cytoplasm"/>
    <property type="evidence" value="ECO:0007669"/>
    <property type="project" value="UniProtKB-SubCell"/>
</dbReference>
<dbReference type="GO" id="GO:0005525">
    <property type="term" value="F:GTP binding"/>
    <property type="evidence" value="ECO:0007669"/>
    <property type="project" value="UniProtKB-UniRule"/>
</dbReference>
<dbReference type="GO" id="GO:0003924">
    <property type="term" value="F:GTPase activity"/>
    <property type="evidence" value="ECO:0007669"/>
    <property type="project" value="InterPro"/>
</dbReference>
<dbReference type="GO" id="GO:0003746">
    <property type="term" value="F:translation elongation factor activity"/>
    <property type="evidence" value="ECO:0007669"/>
    <property type="project" value="UniProtKB-UniRule"/>
</dbReference>
<dbReference type="GO" id="GO:0032790">
    <property type="term" value="P:ribosome disassembly"/>
    <property type="evidence" value="ECO:0000318"/>
    <property type="project" value="GO_Central"/>
</dbReference>
<dbReference type="CDD" id="cd01886">
    <property type="entry name" value="EF-G"/>
    <property type="match status" value="1"/>
</dbReference>
<dbReference type="CDD" id="cd16262">
    <property type="entry name" value="EFG_III"/>
    <property type="match status" value="1"/>
</dbReference>
<dbReference type="CDD" id="cd01434">
    <property type="entry name" value="EFG_mtEFG1_IV"/>
    <property type="match status" value="1"/>
</dbReference>
<dbReference type="CDD" id="cd03713">
    <property type="entry name" value="EFG_mtEFG_C"/>
    <property type="match status" value="1"/>
</dbReference>
<dbReference type="CDD" id="cd04088">
    <property type="entry name" value="EFG_mtEFG_II"/>
    <property type="match status" value="1"/>
</dbReference>
<dbReference type="FunFam" id="2.40.30.10:FF:000006">
    <property type="entry name" value="Elongation factor G"/>
    <property type="match status" value="1"/>
</dbReference>
<dbReference type="FunFam" id="3.30.230.10:FF:000003">
    <property type="entry name" value="Elongation factor G"/>
    <property type="match status" value="1"/>
</dbReference>
<dbReference type="FunFam" id="3.30.70.240:FF:000001">
    <property type="entry name" value="Elongation factor G"/>
    <property type="match status" value="1"/>
</dbReference>
<dbReference type="FunFam" id="3.30.70.870:FF:000001">
    <property type="entry name" value="Elongation factor G"/>
    <property type="match status" value="1"/>
</dbReference>
<dbReference type="FunFam" id="3.40.50.300:FF:000029">
    <property type="entry name" value="Elongation factor G"/>
    <property type="match status" value="1"/>
</dbReference>
<dbReference type="Gene3D" id="3.30.230.10">
    <property type="match status" value="1"/>
</dbReference>
<dbReference type="Gene3D" id="3.30.70.240">
    <property type="match status" value="1"/>
</dbReference>
<dbReference type="Gene3D" id="3.30.70.870">
    <property type="entry name" value="Elongation Factor G (Translational Gtpase), domain 3"/>
    <property type="match status" value="1"/>
</dbReference>
<dbReference type="Gene3D" id="3.40.50.300">
    <property type="entry name" value="P-loop containing nucleotide triphosphate hydrolases"/>
    <property type="match status" value="1"/>
</dbReference>
<dbReference type="Gene3D" id="2.40.30.10">
    <property type="entry name" value="Translation factors"/>
    <property type="match status" value="1"/>
</dbReference>
<dbReference type="HAMAP" id="MF_00054_B">
    <property type="entry name" value="EF_G_EF_2_B"/>
    <property type="match status" value="1"/>
</dbReference>
<dbReference type="InterPro" id="IPR053905">
    <property type="entry name" value="EF-G-like_DII"/>
</dbReference>
<dbReference type="InterPro" id="IPR041095">
    <property type="entry name" value="EFG_II"/>
</dbReference>
<dbReference type="InterPro" id="IPR009022">
    <property type="entry name" value="EFG_III"/>
</dbReference>
<dbReference type="InterPro" id="IPR035647">
    <property type="entry name" value="EFG_III/V"/>
</dbReference>
<dbReference type="InterPro" id="IPR047872">
    <property type="entry name" value="EFG_IV"/>
</dbReference>
<dbReference type="InterPro" id="IPR035649">
    <property type="entry name" value="EFG_V"/>
</dbReference>
<dbReference type="InterPro" id="IPR000640">
    <property type="entry name" value="EFG_V-like"/>
</dbReference>
<dbReference type="InterPro" id="IPR031157">
    <property type="entry name" value="G_TR_CS"/>
</dbReference>
<dbReference type="InterPro" id="IPR027417">
    <property type="entry name" value="P-loop_NTPase"/>
</dbReference>
<dbReference type="InterPro" id="IPR020568">
    <property type="entry name" value="Ribosomal_Su5_D2-typ_SF"/>
</dbReference>
<dbReference type="InterPro" id="IPR014721">
    <property type="entry name" value="Ribsml_uS5_D2-typ_fold_subgr"/>
</dbReference>
<dbReference type="InterPro" id="IPR005225">
    <property type="entry name" value="Small_GTP-bd"/>
</dbReference>
<dbReference type="InterPro" id="IPR000795">
    <property type="entry name" value="T_Tr_GTP-bd_dom"/>
</dbReference>
<dbReference type="InterPro" id="IPR009000">
    <property type="entry name" value="Transl_B-barrel_sf"/>
</dbReference>
<dbReference type="InterPro" id="IPR004540">
    <property type="entry name" value="Transl_elong_EFG/EF2"/>
</dbReference>
<dbReference type="InterPro" id="IPR005517">
    <property type="entry name" value="Transl_elong_EFG/EF2_IV"/>
</dbReference>
<dbReference type="NCBIfam" id="TIGR00484">
    <property type="entry name" value="EF-G"/>
    <property type="match status" value="1"/>
</dbReference>
<dbReference type="NCBIfam" id="NF009379">
    <property type="entry name" value="PRK12740.1-3"/>
    <property type="match status" value="1"/>
</dbReference>
<dbReference type="NCBIfam" id="NF009381">
    <property type="entry name" value="PRK12740.1-5"/>
    <property type="match status" value="1"/>
</dbReference>
<dbReference type="NCBIfam" id="TIGR00231">
    <property type="entry name" value="small_GTP"/>
    <property type="match status" value="1"/>
</dbReference>
<dbReference type="PANTHER" id="PTHR43261:SF1">
    <property type="entry name" value="RIBOSOME-RELEASING FACTOR 2, MITOCHONDRIAL"/>
    <property type="match status" value="1"/>
</dbReference>
<dbReference type="PANTHER" id="PTHR43261">
    <property type="entry name" value="TRANSLATION ELONGATION FACTOR G-RELATED"/>
    <property type="match status" value="1"/>
</dbReference>
<dbReference type="Pfam" id="PF22042">
    <property type="entry name" value="EF-G_D2"/>
    <property type="match status" value="1"/>
</dbReference>
<dbReference type="Pfam" id="PF00679">
    <property type="entry name" value="EFG_C"/>
    <property type="match status" value="1"/>
</dbReference>
<dbReference type="Pfam" id="PF14492">
    <property type="entry name" value="EFG_III"/>
    <property type="match status" value="1"/>
</dbReference>
<dbReference type="Pfam" id="PF03764">
    <property type="entry name" value="EFG_IV"/>
    <property type="match status" value="1"/>
</dbReference>
<dbReference type="Pfam" id="PF00009">
    <property type="entry name" value="GTP_EFTU"/>
    <property type="match status" value="1"/>
</dbReference>
<dbReference type="PRINTS" id="PR00315">
    <property type="entry name" value="ELONGATNFCT"/>
</dbReference>
<dbReference type="SMART" id="SM00838">
    <property type="entry name" value="EFG_C"/>
    <property type="match status" value="1"/>
</dbReference>
<dbReference type="SMART" id="SM00889">
    <property type="entry name" value="EFG_IV"/>
    <property type="match status" value="1"/>
</dbReference>
<dbReference type="SUPFAM" id="SSF54980">
    <property type="entry name" value="EF-G C-terminal domain-like"/>
    <property type="match status" value="2"/>
</dbReference>
<dbReference type="SUPFAM" id="SSF52540">
    <property type="entry name" value="P-loop containing nucleoside triphosphate hydrolases"/>
    <property type="match status" value="1"/>
</dbReference>
<dbReference type="SUPFAM" id="SSF54211">
    <property type="entry name" value="Ribosomal protein S5 domain 2-like"/>
    <property type="match status" value="1"/>
</dbReference>
<dbReference type="SUPFAM" id="SSF50447">
    <property type="entry name" value="Translation proteins"/>
    <property type="match status" value="1"/>
</dbReference>
<dbReference type="PROSITE" id="PS00301">
    <property type="entry name" value="G_TR_1"/>
    <property type="match status" value="1"/>
</dbReference>
<dbReference type="PROSITE" id="PS51722">
    <property type="entry name" value="G_TR_2"/>
    <property type="match status" value="1"/>
</dbReference>
<organism>
    <name type="scientific">Streptococcus pneumoniae (strain ATCC BAA-255 / R6)</name>
    <dbReference type="NCBI Taxonomy" id="171101"/>
    <lineage>
        <taxon>Bacteria</taxon>
        <taxon>Bacillati</taxon>
        <taxon>Bacillota</taxon>
        <taxon>Bacilli</taxon>
        <taxon>Lactobacillales</taxon>
        <taxon>Streptococcaceae</taxon>
        <taxon>Streptococcus</taxon>
    </lineage>
</organism>
<keyword id="KW-0963">Cytoplasm</keyword>
<keyword id="KW-0251">Elongation factor</keyword>
<keyword id="KW-0342">GTP-binding</keyword>
<keyword id="KW-0547">Nucleotide-binding</keyword>
<keyword id="KW-0648">Protein biosynthesis</keyword>
<keyword id="KW-1185">Reference proteome</keyword>
<gene>
    <name evidence="1" type="primary">fusA</name>
    <name type="ordered locus">spr0250</name>
</gene>
<evidence type="ECO:0000255" key="1">
    <source>
        <dbReference type="HAMAP-Rule" id="MF_00054"/>
    </source>
</evidence>
<feature type="chain" id="PRO_0000091231" description="Elongation factor G">
    <location>
        <begin position="1"/>
        <end position="693"/>
    </location>
</feature>
<feature type="domain" description="tr-type G">
    <location>
        <begin position="8"/>
        <end position="282"/>
    </location>
</feature>
<feature type="binding site" evidence="1">
    <location>
        <begin position="17"/>
        <end position="24"/>
    </location>
    <ligand>
        <name>GTP</name>
        <dbReference type="ChEBI" id="CHEBI:37565"/>
    </ligand>
</feature>
<feature type="binding site" evidence="1">
    <location>
        <begin position="81"/>
        <end position="85"/>
    </location>
    <ligand>
        <name>GTP</name>
        <dbReference type="ChEBI" id="CHEBI:37565"/>
    </ligand>
</feature>
<feature type="binding site" evidence="1">
    <location>
        <begin position="135"/>
        <end position="138"/>
    </location>
    <ligand>
        <name>GTP</name>
        <dbReference type="ChEBI" id="CHEBI:37565"/>
    </ligand>
</feature>
<accession>P64023</accession>
<accession>Q97SQ3</accession>